<comment type="function">
    <text evidence="2">Required for the assembly of cytochrome c oxidase.</text>
</comment>
<comment type="subcellular location">
    <subcellularLocation>
        <location evidence="1">Mitochondrion intermembrane space</location>
    </subcellularLocation>
</comment>
<comment type="similarity">
    <text evidence="6">Belongs to the COX23 family.</text>
</comment>
<keyword id="KW-1015">Disulfide bond</keyword>
<keyword id="KW-0496">Mitochondrion</keyword>
<keyword id="KW-1185">Reference proteome</keyword>
<keyword id="KW-0809">Transit peptide</keyword>
<organism>
    <name type="scientific">Neurospora crassa (strain ATCC 24698 / 74-OR23-1A / CBS 708.71 / DSM 1257 / FGSC 987)</name>
    <dbReference type="NCBI Taxonomy" id="367110"/>
    <lineage>
        <taxon>Eukaryota</taxon>
        <taxon>Fungi</taxon>
        <taxon>Dikarya</taxon>
        <taxon>Ascomycota</taxon>
        <taxon>Pezizomycotina</taxon>
        <taxon>Sordariomycetes</taxon>
        <taxon>Sordariomycetidae</taxon>
        <taxon>Sordariales</taxon>
        <taxon>Sordariaceae</taxon>
        <taxon>Neurospora</taxon>
    </lineage>
</organism>
<accession>Q7S4H6</accession>
<reference key="1">
    <citation type="journal article" date="2003" name="Nature">
        <title>The genome sequence of the filamentous fungus Neurospora crassa.</title>
        <authorList>
            <person name="Galagan J.E."/>
            <person name="Calvo S.E."/>
            <person name="Borkovich K.A."/>
            <person name="Selker E.U."/>
            <person name="Read N.D."/>
            <person name="Jaffe D.B."/>
            <person name="FitzHugh W."/>
            <person name="Ma L.-J."/>
            <person name="Smirnov S."/>
            <person name="Purcell S."/>
            <person name="Rehman B."/>
            <person name="Elkins T."/>
            <person name="Engels R."/>
            <person name="Wang S."/>
            <person name="Nielsen C.B."/>
            <person name="Butler J."/>
            <person name="Endrizzi M."/>
            <person name="Qui D."/>
            <person name="Ianakiev P."/>
            <person name="Bell-Pedersen D."/>
            <person name="Nelson M.A."/>
            <person name="Werner-Washburne M."/>
            <person name="Selitrennikoff C.P."/>
            <person name="Kinsey J.A."/>
            <person name="Braun E.L."/>
            <person name="Zelter A."/>
            <person name="Schulte U."/>
            <person name="Kothe G.O."/>
            <person name="Jedd G."/>
            <person name="Mewes H.-W."/>
            <person name="Staben C."/>
            <person name="Marcotte E."/>
            <person name="Greenberg D."/>
            <person name="Roy A."/>
            <person name="Foley K."/>
            <person name="Naylor J."/>
            <person name="Stange-Thomann N."/>
            <person name="Barrett R."/>
            <person name="Gnerre S."/>
            <person name="Kamal M."/>
            <person name="Kamvysselis M."/>
            <person name="Mauceli E.W."/>
            <person name="Bielke C."/>
            <person name="Rudd S."/>
            <person name="Frishman D."/>
            <person name="Krystofova S."/>
            <person name="Rasmussen C."/>
            <person name="Metzenberg R.L."/>
            <person name="Perkins D.D."/>
            <person name="Kroken S."/>
            <person name="Cogoni C."/>
            <person name="Macino G."/>
            <person name="Catcheside D.E.A."/>
            <person name="Li W."/>
            <person name="Pratt R.J."/>
            <person name="Osmani S.A."/>
            <person name="DeSouza C.P.C."/>
            <person name="Glass N.L."/>
            <person name="Orbach M.J."/>
            <person name="Berglund J.A."/>
            <person name="Voelker R."/>
            <person name="Yarden O."/>
            <person name="Plamann M."/>
            <person name="Seiler S."/>
            <person name="Dunlap J.C."/>
            <person name="Radford A."/>
            <person name="Aramayo R."/>
            <person name="Natvig D.O."/>
            <person name="Alex L.A."/>
            <person name="Mannhaupt G."/>
            <person name="Ebbole D.J."/>
            <person name="Freitag M."/>
            <person name="Paulsen I."/>
            <person name="Sachs M.S."/>
            <person name="Lander E.S."/>
            <person name="Nusbaum C."/>
            <person name="Birren B.W."/>
        </authorList>
    </citation>
    <scope>NUCLEOTIDE SEQUENCE [LARGE SCALE GENOMIC DNA]</scope>
    <source>
        <strain>ATCC 24698 / 74-OR23-1A / CBS 708.71 / DSM 1257 / FGSC 987</strain>
    </source>
</reference>
<gene>
    <name type="primary">cox-23</name>
    <name type="ORF">NCU02217</name>
</gene>
<feature type="transit peptide" description="Mitochondrion" evidence="3">
    <location>
        <begin position="1"/>
        <end status="unknown"/>
    </location>
</feature>
<feature type="chain" id="PRO_0000280665" description="Cytochrome c oxidase-assembly factor cox-23, mitochondrial">
    <location>
        <begin status="unknown"/>
        <end position="82"/>
    </location>
</feature>
<feature type="domain" description="CHCH" evidence="4">
    <location>
        <begin position="29"/>
        <end position="71"/>
    </location>
</feature>
<feature type="region of interest" description="Disordered" evidence="5">
    <location>
        <begin position="1"/>
        <end position="27"/>
    </location>
</feature>
<feature type="short sequence motif" description="Cx9C motif 1" evidence="4">
    <location>
        <begin position="32"/>
        <end position="42"/>
    </location>
</feature>
<feature type="short sequence motif" description="Cx9C motif 2" evidence="4">
    <location>
        <begin position="53"/>
        <end position="63"/>
    </location>
</feature>
<feature type="compositionally biased region" description="Basic and acidic residues" evidence="5">
    <location>
        <begin position="7"/>
        <end position="27"/>
    </location>
</feature>
<feature type="disulfide bond" evidence="4">
    <location>
        <begin position="32"/>
        <end position="63"/>
    </location>
</feature>
<feature type="disulfide bond" evidence="4">
    <location>
        <begin position="42"/>
        <end position="53"/>
    </location>
</feature>
<protein>
    <recommendedName>
        <fullName>Cytochrome c oxidase-assembly factor cox-23, mitochondrial</fullName>
    </recommendedName>
</protein>
<name>COX23_NEUCR</name>
<dbReference type="EMBL" id="CM002242">
    <property type="protein sequence ID" value="EAA30394.1"/>
    <property type="molecule type" value="Genomic_DNA"/>
</dbReference>
<dbReference type="RefSeq" id="XP_959630.1">
    <property type="nucleotide sequence ID" value="XM_954537.2"/>
</dbReference>
<dbReference type="SMR" id="Q7S4H6"/>
<dbReference type="STRING" id="367110.Q7S4H6"/>
<dbReference type="PaxDb" id="5141-EFNCRP00000003273"/>
<dbReference type="EnsemblFungi" id="EAA30394">
    <property type="protein sequence ID" value="EAA30394"/>
    <property type="gene ID" value="NCU02217"/>
</dbReference>
<dbReference type="GeneID" id="3875777"/>
<dbReference type="KEGG" id="ncr:NCU02217"/>
<dbReference type="VEuPathDB" id="FungiDB:NCU02217"/>
<dbReference type="HOGENOM" id="CLU_157422_0_0_1"/>
<dbReference type="InParanoid" id="Q7S4H6"/>
<dbReference type="OMA" id="GGDRDMC"/>
<dbReference type="OrthoDB" id="9971592at2759"/>
<dbReference type="Proteomes" id="UP000001805">
    <property type="component" value="Chromosome 7, Linkage Group VII"/>
</dbReference>
<dbReference type="GO" id="GO:0005758">
    <property type="term" value="C:mitochondrial intermembrane space"/>
    <property type="evidence" value="ECO:0007669"/>
    <property type="project" value="UniProtKB-SubCell"/>
</dbReference>
<dbReference type="GO" id="GO:0005739">
    <property type="term" value="C:mitochondrion"/>
    <property type="evidence" value="ECO:0000318"/>
    <property type="project" value="GO_Central"/>
</dbReference>
<dbReference type="GO" id="GO:0033108">
    <property type="term" value="P:mitochondrial respiratory chain complex assembly"/>
    <property type="evidence" value="ECO:0000318"/>
    <property type="project" value="GO_Central"/>
</dbReference>
<dbReference type="InterPro" id="IPR051040">
    <property type="entry name" value="COX23"/>
</dbReference>
<dbReference type="InterPro" id="IPR009069">
    <property type="entry name" value="Cys_alpha_HP_mot_SF"/>
</dbReference>
<dbReference type="PANTHER" id="PTHR46811">
    <property type="entry name" value="COILED-COIL-HELIX-COILED-COIL-HELIX DOMAIN-CONTAINING PROTEIN 7"/>
    <property type="match status" value="1"/>
</dbReference>
<dbReference type="PANTHER" id="PTHR46811:SF1">
    <property type="entry name" value="COILED-COIL-HELIX-COILED-COIL-HELIX DOMAIN-CONTAINING PROTEIN 7"/>
    <property type="match status" value="1"/>
</dbReference>
<dbReference type="SUPFAM" id="SSF47072">
    <property type="entry name" value="Cysteine alpha-hairpin motif"/>
    <property type="match status" value="1"/>
</dbReference>
<dbReference type="PROSITE" id="PS51808">
    <property type="entry name" value="CHCH"/>
    <property type="match status" value="1"/>
</dbReference>
<sequence>MAQAGSENKEPWNEETRAKFEGKSRSEYLDPCQEAAQRSIRCLHRNQGDRTMCSDYFEAYRECKKQWIERRREQKRKAGALF</sequence>
<evidence type="ECO:0000250" key="1"/>
<evidence type="ECO:0000250" key="2">
    <source>
        <dbReference type="UniProtKB" id="P38824"/>
    </source>
</evidence>
<evidence type="ECO:0000255" key="3"/>
<evidence type="ECO:0000255" key="4">
    <source>
        <dbReference type="PROSITE-ProRule" id="PRU01150"/>
    </source>
</evidence>
<evidence type="ECO:0000256" key="5">
    <source>
        <dbReference type="SAM" id="MobiDB-lite"/>
    </source>
</evidence>
<evidence type="ECO:0000305" key="6"/>
<proteinExistence type="inferred from homology"/>